<reference key="1">
    <citation type="journal article" date="2002" name="Proc. Natl. Acad. Sci. U.S.A.">
        <title>The genome sequence of Bifidobacterium longum reflects its adaptation to the human gastrointestinal tract.</title>
        <authorList>
            <person name="Schell M.A."/>
            <person name="Karmirantzou M."/>
            <person name="Snel B."/>
            <person name="Vilanova D."/>
            <person name="Berger B."/>
            <person name="Pessi G."/>
            <person name="Zwahlen M.-C."/>
            <person name="Desiere F."/>
            <person name="Bork P."/>
            <person name="Delley M."/>
            <person name="Pridmore R.D."/>
            <person name="Arigoni F."/>
        </authorList>
    </citation>
    <scope>NUCLEOTIDE SEQUENCE [LARGE SCALE GENOMIC DNA]</scope>
    <source>
        <strain>NCC 2705</strain>
    </source>
</reference>
<keyword id="KW-0479">Metal-binding</keyword>
<keyword id="KW-1185">Reference proteome</keyword>
<keyword id="KW-0687">Ribonucleoprotein</keyword>
<keyword id="KW-0689">Ribosomal protein</keyword>
<keyword id="KW-0694">RNA-binding</keyword>
<keyword id="KW-0699">rRNA-binding</keyword>
<keyword id="KW-0862">Zinc</keyword>
<gene>
    <name evidence="1" type="primary">rpsZ</name>
    <name evidence="1" type="synonym">rpsN</name>
    <name type="ordered locus">BL1593</name>
</gene>
<name>RS14Z_BIFLO</name>
<comment type="function">
    <text evidence="1">Binds 16S rRNA, required for the assembly of 30S particles and may also be responsible for determining the conformation of the 16S rRNA at the A site.</text>
</comment>
<comment type="cofactor">
    <cofactor evidence="1">
        <name>Zn(2+)</name>
        <dbReference type="ChEBI" id="CHEBI:29105"/>
    </cofactor>
    <text evidence="1">Binds 1 zinc ion per subunit.</text>
</comment>
<comment type="subunit">
    <text evidence="1">Part of the 30S ribosomal subunit. Contacts proteins S3 and S10.</text>
</comment>
<comment type="similarity">
    <text evidence="1">Belongs to the universal ribosomal protein uS14 family. Zinc-binding uS14 subfamily.</text>
</comment>
<protein>
    <recommendedName>
        <fullName evidence="1">Small ribosomal subunit protein uS14</fullName>
    </recommendedName>
    <alternativeName>
        <fullName evidence="2">30S ribosomal protein S14 type Z</fullName>
    </alternativeName>
</protein>
<organism>
    <name type="scientific">Bifidobacterium longum (strain NCC 2705)</name>
    <dbReference type="NCBI Taxonomy" id="206672"/>
    <lineage>
        <taxon>Bacteria</taxon>
        <taxon>Bacillati</taxon>
        <taxon>Actinomycetota</taxon>
        <taxon>Actinomycetes</taxon>
        <taxon>Bifidobacteriales</taxon>
        <taxon>Bifidobacteriaceae</taxon>
        <taxon>Bifidobacterium</taxon>
    </lineage>
</organism>
<evidence type="ECO:0000255" key="1">
    <source>
        <dbReference type="HAMAP-Rule" id="MF_01364"/>
    </source>
</evidence>
<evidence type="ECO:0000305" key="2"/>
<proteinExistence type="inferred from homology"/>
<sequence>MAKTALKNKAAGKPKFKVRAYTRCQVCGRPHSVYRKFGLCRICLREKAHRGELPGVTKSSW</sequence>
<feature type="chain" id="PRO_0000269085" description="Small ribosomal subunit protein uS14">
    <location>
        <begin position="1"/>
        <end position="61"/>
    </location>
</feature>
<feature type="binding site" evidence="1">
    <location>
        <position position="24"/>
    </location>
    <ligand>
        <name>Zn(2+)</name>
        <dbReference type="ChEBI" id="CHEBI:29105"/>
    </ligand>
</feature>
<feature type="binding site" evidence="1">
    <location>
        <position position="27"/>
    </location>
    <ligand>
        <name>Zn(2+)</name>
        <dbReference type="ChEBI" id="CHEBI:29105"/>
    </ligand>
</feature>
<feature type="binding site" evidence="1">
    <location>
        <position position="40"/>
    </location>
    <ligand>
        <name>Zn(2+)</name>
        <dbReference type="ChEBI" id="CHEBI:29105"/>
    </ligand>
</feature>
<feature type="binding site" evidence="1">
    <location>
        <position position="43"/>
    </location>
    <ligand>
        <name>Zn(2+)</name>
        <dbReference type="ChEBI" id="CHEBI:29105"/>
    </ligand>
</feature>
<accession>Q8G405</accession>
<dbReference type="EMBL" id="AE014295">
    <property type="protein sequence ID" value="AAN25382.1"/>
    <property type="molecule type" value="Genomic_DNA"/>
</dbReference>
<dbReference type="RefSeq" id="NP_696746.1">
    <property type="nucleotide sequence ID" value="NC_004307.2"/>
</dbReference>
<dbReference type="RefSeq" id="WP_003814530.1">
    <property type="nucleotide sequence ID" value="NC_004307.2"/>
</dbReference>
<dbReference type="SMR" id="Q8G405"/>
<dbReference type="STRING" id="206672.BL1593"/>
<dbReference type="EnsemblBacteria" id="AAN25382">
    <property type="protein sequence ID" value="AAN25382"/>
    <property type="gene ID" value="BL1593"/>
</dbReference>
<dbReference type="KEGG" id="blo:BL1593"/>
<dbReference type="PATRIC" id="fig|206672.9.peg.1648"/>
<dbReference type="HOGENOM" id="CLU_139869_3_0_11"/>
<dbReference type="OrthoDB" id="9810484at2"/>
<dbReference type="PhylomeDB" id="Q8G405"/>
<dbReference type="PRO" id="PR:Q8G405"/>
<dbReference type="Proteomes" id="UP000000439">
    <property type="component" value="Chromosome"/>
</dbReference>
<dbReference type="GO" id="GO:0005737">
    <property type="term" value="C:cytoplasm"/>
    <property type="evidence" value="ECO:0007669"/>
    <property type="project" value="UniProtKB-ARBA"/>
</dbReference>
<dbReference type="GO" id="GO:0015935">
    <property type="term" value="C:small ribosomal subunit"/>
    <property type="evidence" value="ECO:0007669"/>
    <property type="project" value="TreeGrafter"/>
</dbReference>
<dbReference type="GO" id="GO:0019843">
    <property type="term" value="F:rRNA binding"/>
    <property type="evidence" value="ECO:0007669"/>
    <property type="project" value="UniProtKB-UniRule"/>
</dbReference>
<dbReference type="GO" id="GO:0003735">
    <property type="term" value="F:structural constituent of ribosome"/>
    <property type="evidence" value="ECO:0007669"/>
    <property type="project" value="InterPro"/>
</dbReference>
<dbReference type="GO" id="GO:0008270">
    <property type="term" value="F:zinc ion binding"/>
    <property type="evidence" value="ECO:0007669"/>
    <property type="project" value="UniProtKB-UniRule"/>
</dbReference>
<dbReference type="GO" id="GO:0006412">
    <property type="term" value="P:translation"/>
    <property type="evidence" value="ECO:0007669"/>
    <property type="project" value="UniProtKB-UniRule"/>
</dbReference>
<dbReference type="FunFam" id="4.10.830.10:FF:000001">
    <property type="entry name" value="30S ribosomal protein S14 type Z"/>
    <property type="match status" value="1"/>
</dbReference>
<dbReference type="Gene3D" id="4.10.830.10">
    <property type="entry name" value="30s Ribosomal Protein S14, Chain N"/>
    <property type="match status" value="1"/>
</dbReference>
<dbReference type="HAMAP" id="MF_01364_B">
    <property type="entry name" value="Ribosomal_uS14_2_B"/>
    <property type="match status" value="1"/>
</dbReference>
<dbReference type="InterPro" id="IPR001209">
    <property type="entry name" value="Ribosomal_uS14"/>
</dbReference>
<dbReference type="InterPro" id="IPR023053">
    <property type="entry name" value="Ribosomal_uS14_bact"/>
</dbReference>
<dbReference type="InterPro" id="IPR018271">
    <property type="entry name" value="Ribosomal_uS14_CS"/>
</dbReference>
<dbReference type="InterPro" id="IPR043140">
    <property type="entry name" value="Ribosomal_uS14_sf"/>
</dbReference>
<dbReference type="NCBIfam" id="NF005974">
    <property type="entry name" value="PRK08061.1"/>
    <property type="match status" value="1"/>
</dbReference>
<dbReference type="PANTHER" id="PTHR19836">
    <property type="entry name" value="30S RIBOSOMAL PROTEIN S14"/>
    <property type="match status" value="1"/>
</dbReference>
<dbReference type="PANTHER" id="PTHR19836:SF19">
    <property type="entry name" value="SMALL RIBOSOMAL SUBUNIT PROTEIN US14M"/>
    <property type="match status" value="1"/>
</dbReference>
<dbReference type="Pfam" id="PF00253">
    <property type="entry name" value="Ribosomal_S14"/>
    <property type="match status" value="1"/>
</dbReference>
<dbReference type="SUPFAM" id="SSF57716">
    <property type="entry name" value="Glucocorticoid receptor-like (DNA-binding domain)"/>
    <property type="match status" value="1"/>
</dbReference>
<dbReference type="PROSITE" id="PS00527">
    <property type="entry name" value="RIBOSOMAL_S14"/>
    <property type="match status" value="1"/>
</dbReference>